<name>CLPS_CORDI</name>
<reference key="1">
    <citation type="journal article" date="2003" name="Nucleic Acids Res.">
        <title>The complete genome sequence and analysis of Corynebacterium diphtheriae NCTC13129.</title>
        <authorList>
            <person name="Cerdeno-Tarraga A.-M."/>
            <person name="Efstratiou A."/>
            <person name="Dover L.G."/>
            <person name="Holden M.T.G."/>
            <person name="Pallen M.J."/>
            <person name="Bentley S.D."/>
            <person name="Besra G.S."/>
            <person name="Churcher C.M."/>
            <person name="James K.D."/>
            <person name="De Zoysa A."/>
            <person name="Chillingworth T."/>
            <person name="Cronin A."/>
            <person name="Dowd L."/>
            <person name="Feltwell T."/>
            <person name="Hamlin N."/>
            <person name="Holroyd S."/>
            <person name="Jagels K."/>
            <person name="Moule S."/>
            <person name="Quail M.A."/>
            <person name="Rabbinowitsch E."/>
            <person name="Rutherford K.M."/>
            <person name="Thomson N.R."/>
            <person name="Unwin L."/>
            <person name="Whitehead S."/>
            <person name="Barrell B.G."/>
            <person name="Parkhill J."/>
        </authorList>
    </citation>
    <scope>NUCLEOTIDE SEQUENCE [LARGE SCALE GENOMIC DNA]</scope>
    <source>
        <strain>ATCC 700971 / NCTC 13129 / Biotype gravis</strain>
    </source>
</reference>
<organism>
    <name type="scientific">Corynebacterium diphtheriae (strain ATCC 700971 / NCTC 13129 / Biotype gravis)</name>
    <dbReference type="NCBI Taxonomy" id="257309"/>
    <lineage>
        <taxon>Bacteria</taxon>
        <taxon>Bacillati</taxon>
        <taxon>Actinomycetota</taxon>
        <taxon>Actinomycetes</taxon>
        <taxon>Mycobacteriales</taxon>
        <taxon>Corynebacteriaceae</taxon>
        <taxon>Corynebacterium</taxon>
    </lineage>
</organism>
<sequence length="113" mass="12348">MYGATNDVNALGVVLSSSMATPSLDEEMAVEVASSENLPWMCIVWDDPVNLMSYVTYVFQTILGYSKKRATELMMQVHTEGKAVVSSGERDKVEADVKKLHTAGLWATMQQGG</sequence>
<dbReference type="EMBL" id="BX248359">
    <property type="protein sequence ID" value="CAE50386.1"/>
    <property type="molecule type" value="Genomic_DNA"/>
</dbReference>
<dbReference type="RefSeq" id="WP_010935380.1">
    <property type="nucleotide sequence ID" value="NC_002935.2"/>
</dbReference>
<dbReference type="SMR" id="Q6NFN0"/>
<dbReference type="STRING" id="257309.DIP1857"/>
<dbReference type="KEGG" id="cdi:DIP1857"/>
<dbReference type="HOGENOM" id="CLU_153743_0_0_11"/>
<dbReference type="Proteomes" id="UP000002198">
    <property type="component" value="Chromosome"/>
</dbReference>
<dbReference type="GO" id="GO:0030163">
    <property type="term" value="P:protein catabolic process"/>
    <property type="evidence" value="ECO:0007669"/>
    <property type="project" value="InterPro"/>
</dbReference>
<dbReference type="GO" id="GO:0006508">
    <property type="term" value="P:proteolysis"/>
    <property type="evidence" value="ECO:0007669"/>
    <property type="project" value="UniProtKB-UniRule"/>
</dbReference>
<dbReference type="Gene3D" id="3.30.1390.10">
    <property type="match status" value="1"/>
</dbReference>
<dbReference type="HAMAP" id="MF_00302">
    <property type="entry name" value="ClpS"/>
    <property type="match status" value="1"/>
</dbReference>
<dbReference type="InterPro" id="IPR022935">
    <property type="entry name" value="ClpS"/>
</dbReference>
<dbReference type="InterPro" id="IPR003769">
    <property type="entry name" value="ClpS_core"/>
</dbReference>
<dbReference type="InterPro" id="IPR014719">
    <property type="entry name" value="Ribosomal_bL12_C/ClpS-like"/>
</dbReference>
<dbReference type="NCBIfam" id="NF000668">
    <property type="entry name" value="PRK00033.1-1"/>
    <property type="match status" value="1"/>
</dbReference>
<dbReference type="Pfam" id="PF02617">
    <property type="entry name" value="ClpS"/>
    <property type="match status" value="1"/>
</dbReference>
<dbReference type="SUPFAM" id="SSF54736">
    <property type="entry name" value="ClpS-like"/>
    <property type="match status" value="1"/>
</dbReference>
<accession>Q6NFN0</accession>
<protein>
    <recommendedName>
        <fullName evidence="1">ATP-dependent Clp protease adapter protein ClpS</fullName>
    </recommendedName>
</protein>
<feature type="chain" id="PRO_0000215701" description="ATP-dependent Clp protease adapter protein ClpS">
    <location>
        <begin position="1"/>
        <end position="113"/>
    </location>
</feature>
<proteinExistence type="inferred from homology"/>
<gene>
    <name evidence="1" type="primary">clpS</name>
    <name type="ordered locus">DIP1857</name>
</gene>
<comment type="function">
    <text evidence="1">Involved in the modulation of the specificity of the ClpAP-mediated ATP-dependent protein degradation.</text>
</comment>
<comment type="subunit">
    <text evidence="1">Binds to the N-terminal domain of the chaperone ClpA.</text>
</comment>
<comment type="similarity">
    <text evidence="1">Belongs to the ClpS family.</text>
</comment>
<evidence type="ECO:0000255" key="1">
    <source>
        <dbReference type="HAMAP-Rule" id="MF_00302"/>
    </source>
</evidence>
<keyword id="KW-1185">Reference proteome</keyword>